<gene>
    <name evidence="1" type="primary">aas</name>
    <name type="ordered locus">UTI89_C3240</name>
</gene>
<accession>Q1R7H5</accession>
<proteinExistence type="inferred from homology"/>
<keyword id="KW-0012">Acyltransferase</keyword>
<keyword id="KW-0067">ATP-binding</keyword>
<keyword id="KW-0997">Cell inner membrane</keyword>
<keyword id="KW-1003">Cell membrane</keyword>
<keyword id="KW-0436">Ligase</keyword>
<keyword id="KW-0472">Membrane</keyword>
<keyword id="KW-0511">Multifunctional enzyme</keyword>
<keyword id="KW-0547">Nucleotide-binding</keyword>
<keyword id="KW-0808">Transferase</keyword>
<keyword id="KW-0812">Transmembrane</keyword>
<keyword id="KW-1133">Transmembrane helix</keyword>
<sequence length="719" mass="80826">MLFSFFRNLCRVLYRVRVTGDTKALKGERVLITPNHVSFIDGILLALFLPVRPVFAVYTSISQQWYMRWLKSFIDFVPLDPTQPMAIKHLVRLVEQGRPVVIFPEGRITTTGSLMKIYDGAGFVAAKSGATVIPVRIEGAELTHFSRLKGLVKRRLFPQITLHILPPTQVEMPDAPRARDRRKIAGEMLHQIMMEARMAVRPRETLYESLLSAMYRFGAGKKCVEDVNFTPDSYRKLLTKTLFVGRILEKYSVEGERIGLMLPNAGISAAVIFGAIARRRIPAMMNYTAGVKGLTSAITAAEIKTIFTSRQFLDKGKLWHLPEQLTQVRWVYLEDLKADVTTADKVWIFAHLLMPRLAQVKQQPEEEALILFTSGSEGHPKGVVHSHKSILANVEQIKTIADFTTNDRFMSALPLFHSFGLTVGLFTPLLTGAEVFLYPSPLHYRIVPELVYDRSCTVLFGTSTFLGHYARFANPYDFYRLRYVVAGAEKLQESTKQLWQDKFGLRILEGYGVTECAPVVSINVPMAAKPGTVGRILPGMDARLLSVPGIEEGGRLQLKGPNIMNGYLRVEKPGVLEVPTAENIRGEMERDWYDTGDIVRFDEQGFVQIQGRAKRFAKIAGEMVSLEMVEQLALGVSPDKVHATAIKSDASKGEALVLFTTDNELTRDKLQQYAREHGVPELAVPRDIRYLKQMPLLGSGKPDFVTLKSWVDEAEQHDE</sequence>
<organism>
    <name type="scientific">Escherichia coli (strain UTI89 / UPEC)</name>
    <dbReference type="NCBI Taxonomy" id="364106"/>
    <lineage>
        <taxon>Bacteria</taxon>
        <taxon>Pseudomonadati</taxon>
        <taxon>Pseudomonadota</taxon>
        <taxon>Gammaproteobacteria</taxon>
        <taxon>Enterobacterales</taxon>
        <taxon>Enterobacteriaceae</taxon>
        <taxon>Escherichia</taxon>
    </lineage>
</organism>
<comment type="function">
    <text evidence="1">Plays a role in lysophospholipid acylation. Transfers fatty acids to the 1-position via an enzyme-bound acyl-ACP intermediate in the presence of ATP and magnesium. Its physiological function is to regenerate phosphatidylethanolamine from 2-acyl-glycero-3-phosphoethanolamine (2-acyl-GPE) formed by transacylation reactions or degradation by phospholipase A1.</text>
</comment>
<comment type="catalytic activity">
    <reaction evidence="1">
        <text>a 2-acyl-sn-glycero-3-phosphoethanolamine + a fatty acyl-[ACP] = a 1,2-diacyl-sn-glycero-3-phosphoethanolamine + holo-[ACP]</text>
        <dbReference type="Rhea" id="RHEA:10304"/>
        <dbReference type="Rhea" id="RHEA-COMP:9685"/>
        <dbReference type="Rhea" id="RHEA-COMP:14125"/>
        <dbReference type="ChEBI" id="CHEBI:64479"/>
        <dbReference type="ChEBI" id="CHEBI:64612"/>
        <dbReference type="ChEBI" id="CHEBI:65213"/>
        <dbReference type="ChEBI" id="CHEBI:138651"/>
        <dbReference type="EC" id="2.3.1.40"/>
    </reaction>
</comment>
<comment type="catalytic activity">
    <reaction evidence="1">
        <text>a long-chain fatty acid + holo-[ACP] + ATP = a long-chain fatty acyl-[ACP] + AMP + diphosphate</text>
        <dbReference type="Rhea" id="RHEA:45588"/>
        <dbReference type="Rhea" id="RHEA-COMP:9685"/>
        <dbReference type="Rhea" id="RHEA-COMP:12682"/>
        <dbReference type="ChEBI" id="CHEBI:30616"/>
        <dbReference type="ChEBI" id="CHEBI:33019"/>
        <dbReference type="ChEBI" id="CHEBI:57560"/>
        <dbReference type="ChEBI" id="CHEBI:64479"/>
        <dbReference type="ChEBI" id="CHEBI:133243"/>
        <dbReference type="ChEBI" id="CHEBI:456215"/>
        <dbReference type="EC" id="6.2.1.20"/>
    </reaction>
</comment>
<comment type="subcellular location">
    <subcellularLocation>
        <location evidence="1">Cell inner membrane</location>
        <topology evidence="1">Multi-pass membrane protein</topology>
    </subcellularLocation>
</comment>
<comment type="similarity">
    <text evidence="1">In the N-terminal section; belongs to the 2-acyl-GPE acetyltransferase family.</text>
</comment>
<comment type="similarity">
    <text evidence="1">In the C-terminal section; belongs to the ATP-dependent AMP-binding enzyme family.</text>
</comment>
<reference key="1">
    <citation type="journal article" date="2006" name="Proc. Natl. Acad. Sci. U.S.A.">
        <title>Identification of genes subject to positive selection in uropathogenic strains of Escherichia coli: a comparative genomics approach.</title>
        <authorList>
            <person name="Chen S.L."/>
            <person name="Hung C.-S."/>
            <person name="Xu J."/>
            <person name="Reigstad C.S."/>
            <person name="Magrini V."/>
            <person name="Sabo A."/>
            <person name="Blasiar D."/>
            <person name="Bieri T."/>
            <person name="Meyer R.R."/>
            <person name="Ozersky P."/>
            <person name="Armstrong J.R."/>
            <person name="Fulton R.S."/>
            <person name="Latreille J.P."/>
            <person name="Spieth J."/>
            <person name="Hooton T.M."/>
            <person name="Mardis E.R."/>
            <person name="Hultgren S.J."/>
            <person name="Gordon J.I."/>
        </authorList>
    </citation>
    <scope>NUCLEOTIDE SEQUENCE [LARGE SCALE GENOMIC DNA]</scope>
    <source>
        <strain>UTI89 / UPEC</strain>
    </source>
</reference>
<protein>
    <recommendedName>
        <fullName evidence="1">Bifunctional protein Aas</fullName>
    </recommendedName>
    <domain>
        <recommendedName>
            <fullName evidence="1">2-acylglycerophosphoethanolamine acyltransferase</fullName>
            <ecNumber evidence="1">2.3.1.40</ecNumber>
        </recommendedName>
        <alternativeName>
            <fullName evidence="1">2-acyl-GPE acyltransferase</fullName>
        </alternativeName>
        <alternativeName>
            <fullName evidence="1">Acyl-[acyl-carrier-protein]--phospholipid O-acyltransferase</fullName>
        </alternativeName>
    </domain>
    <domain>
        <recommendedName>
            <fullName evidence="1">Acyl-[acyl-carrier-protein] synthetase</fullName>
            <ecNumber evidence="1">6.2.1.20</ecNumber>
        </recommendedName>
        <alternativeName>
            <fullName evidence="1">Acyl-ACP synthetase</fullName>
        </alternativeName>
        <alternativeName>
            <fullName evidence="1">Long-chain-fatty-acid--[acyl-carrier-protein] ligase</fullName>
        </alternativeName>
    </domain>
</protein>
<evidence type="ECO:0000255" key="1">
    <source>
        <dbReference type="HAMAP-Rule" id="MF_01162"/>
    </source>
</evidence>
<feature type="chain" id="PRO_1000065638" description="Bifunctional protein Aas">
    <location>
        <begin position="1"/>
        <end position="719"/>
    </location>
</feature>
<feature type="transmembrane region" description="Helical" evidence="1">
    <location>
        <begin position="258"/>
        <end position="277"/>
    </location>
</feature>
<feature type="transmembrane region" description="Helical" evidence="1">
    <location>
        <begin position="409"/>
        <end position="433"/>
    </location>
</feature>
<feature type="region of interest" description="Acyltransferase">
    <location>
        <begin position="15"/>
        <end position="138"/>
    </location>
</feature>
<feature type="region of interest" description="AMP-binding">
    <location>
        <begin position="233"/>
        <end position="646"/>
    </location>
</feature>
<feature type="active site" evidence="1">
    <location>
        <position position="36"/>
    </location>
</feature>
<name>AAS_ECOUT</name>
<dbReference type="EC" id="2.3.1.40" evidence="1"/>
<dbReference type="EC" id="6.2.1.20" evidence="1"/>
<dbReference type="EMBL" id="CP000243">
    <property type="protein sequence ID" value="ABE08689.1"/>
    <property type="molecule type" value="Genomic_DNA"/>
</dbReference>
<dbReference type="RefSeq" id="WP_000899024.1">
    <property type="nucleotide sequence ID" value="NZ_CP064825.1"/>
</dbReference>
<dbReference type="SMR" id="Q1R7H5"/>
<dbReference type="KEGG" id="eci:UTI89_C3240"/>
<dbReference type="HOGENOM" id="CLU_000022_59_8_6"/>
<dbReference type="Proteomes" id="UP000001952">
    <property type="component" value="Chromosome"/>
</dbReference>
<dbReference type="GO" id="GO:0005886">
    <property type="term" value="C:plasma membrane"/>
    <property type="evidence" value="ECO:0007669"/>
    <property type="project" value="UniProtKB-SubCell"/>
</dbReference>
<dbReference type="GO" id="GO:0008779">
    <property type="term" value="F:acyl-[acyl-carrier-protein]-phospholipid O-acyltransferase activity"/>
    <property type="evidence" value="ECO:0007669"/>
    <property type="project" value="UniProtKB-UniRule"/>
</dbReference>
<dbReference type="GO" id="GO:0005524">
    <property type="term" value="F:ATP binding"/>
    <property type="evidence" value="ECO:0007669"/>
    <property type="project" value="UniProtKB-KW"/>
</dbReference>
<dbReference type="GO" id="GO:0008922">
    <property type="term" value="F:long-chain fatty acid [acyl-carrier-protein] ligase activity"/>
    <property type="evidence" value="ECO:0007669"/>
    <property type="project" value="UniProtKB-UniRule"/>
</dbReference>
<dbReference type="GO" id="GO:0031956">
    <property type="term" value="F:medium-chain fatty acid-CoA ligase activity"/>
    <property type="evidence" value="ECO:0007669"/>
    <property type="project" value="TreeGrafter"/>
</dbReference>
<dbReference type="GO" id="GO:0006631">
    <property type="term" value="P:fatty acid metabolic process"/>
    <property type="evidence" value="ECO:0007669"/>
    <property type="project" value="InterPro"/>
</dbReference>
<dbReference type="GO" id="GO:0008654">
    <property type="term" value="P:phospholipid biosynthetic process"/>
    <property type="evidence" value="ECO:0007669"/>
    <property type="project" value="InterPro"/>
</dbReference>
<dbReference type="CDD" id="cd05909">
    <property type="entry name" value="AAS_C"/>
    <property type="match status" value="1"/>
</dbReference>
<dbReference type="CDD" id="cd07989">
    <property type="entry name" value="LPLAT_AGPAT-like"/>
    <property type="match status" value="1"/>
</dbReference>
<dbReference type="FunFam" id="3.30.300.30:FF:000009">
    <property type="entry name" value="Bifunctional protein Aas"/>
    <property type="match status" value="1"/>
</dbReference>
<dbReference type="FunFam" id="3.40.50.12780:FF:000009">
    <property type="entry name" value="Bifunctional protein Aas"/>
    <property type="match status" value="1"/>
</dbReference>
<dbReference type="Gene3D" id="3.30.300.30">
    <property type="match status" value="1"/>
</dbReference>
<dbReference type="Gene3D" id="3.40.50.12780">
    <property type="entry name" value="N-terminal domain of ligase-like"/>
    <property type="match status" value="1"/>
</dbReference>
<dbReference type="HAMAP" id="MF_01162">
    <property type="entry name" value="Aas"/>
    <property type="match status" value="1"/>
</dbReference>
<dbReference type="InterPro" id="IPR023775">
    <property type="entry name" value="Aas"/>
</dbReference>
<dbReference type="InterPro" id="IPR045851">
    <property type="entry name" value="AMP-bd_C_sf"/>
</dbReference>
<dbReference type="InterPro" id="IPR020845">
    <property type="entry name" value="AMP-binding_CS"/>
</dbReference>
<dbReference type="InterPro" id="IPR000873">
    <property type="entry name" value="AMP-dep_synth/lig_dom"/>
</dbReference>
<dbReference type="InterPro" id="IPR042099">
    <property type="entry name" value="ANL_N_sf"/>
</dbReference>
<dbReference type="InterPro" id="IPR002123">
    <property type="entry name" value="Plipid/glycerol_acylTrfase"/>
</dbReference>
<dbReference type="NCBIfam" id="NF005959">
    <property type="entry name" value="PRK08043.1"/>
    <property type="match status" value="1"/>
</dbReference>
<dbReference type="PANTHER" id="PTHR43201">
    <property type="entry name" value="ACYL-COA SYNTHETASE"/>
    <property type="match status" value="1"/>
</dbReference>
<dbReference type="PANTHER" id="PTHR43201:SF8">
    <property type="entry name" value="ACYL-COA SYNTHETASE FAMILY MEMBER 3"/>
    <property type="match status" value="1"/>
</dbReference>
<dbReference type="Pfam" id="PF01553">
    <property type="entry name" value="Acyltransferase"/>
    <property type="match status" value="1"/>
</dbReference>
<dbReference type="Pfam" id="PF00501">
    <property type="entry name" value="AMP-binding"/>
    <property type="match status" value="1"/>
</dbReference>
<dbReference type="SMART" id="SM00563">
    <property type="entry name" value="PlsC"/>
    <property type="match status" value="1"/>
</dbReference>
<dbReference type="SUPFAM" id="SSF56801">
    <property type="entry name" value="Acetyl-CoA synthetase-like"/>
    <property type="match status" value="1"/>
</dbReference>
<dbReference type="SUPFAM" id="SSF69593">
    <property type="entry name" value="Glycerol-3-phosphate (1)-acyltransferase"/>
    <property type="match status" value="1"/>
</dbReference>
<dbReference type="PROSITE" id="PS00455">
    <property type="entry name" value="AMP_BINDING"/>
    <property type="match status" value="1"/>
</dbReference>